<name>BGL07_ARATH</name>
<comment type="catalytic activity">
    <reaction evidence="1">
        <text>Hydrolysis of terminal, non-reducing beta-D-glucosyl residues with release of beta-D-glucose.</text>
        <dbReference type="EC" id="3.2.1.21"/>
    </reaction>
</comment>
<comment type="similarity">
    <text evidence="8">Belongs to the glycosyl hydrolase 1 family.</text>
</comment>
<comment type="sequence caution" evidence="8">
    <conflict type="erroneous gene model prediction">
        <sequence resource="EMBL-CDS" id="CAB83124"/>
    </conflict>
</comment>
<feature type="signal peptide" evidence="5">
    <location>
        <begin position="1"/>
        <end position="22"/>
    </location>
</feature>
<feature type="chain" id="PRO_0000389569" description="Beta-glucosidase 7">
    <location>
        <begin position="23"/>
        <end position="502"/>
    </location>
</feature>
<feature type="active site" description="Proton donor" evidence="3">
    <location>
        <position position="186"/>
    </location>
</feature>
<feature type="active site" description="Nucleophile" evidence="3">
    <location>
        <position position="392"/>
    </location>
</feature>
<feature type="binding site" evidence="3">
    <location>
        <position position="42"/>
    </location>
    <ligand>
        <name>a beta-D-glucoside</name>
        <dbReference type="ChEBI" id="CHEBI:22798"/>
    </ligand>
</feature>
<feature type="binding site" evidence="3">
    <location>
        <position position="140"/>
    </location>
    <ligand>
        <name>a beta-D-glucoside</name>
        <dbReference type="ChEBI" id="CHEBI:22798"/>
    </ligand>
</feature>
<feature type="binding site" evidence="3">
    <location>
        <begin position="185"/>
        <end position="186"/>
    </location>
    <ligand>
        <name>a beta-D-glucoside</name>
        <dbReference type="ChEBI" id="CHEBI:22798"/>
    </ligand>
</feature>
<feature type="binding site" evidence="3">
    <location>
        <position position="325"/>
    </location>
    <ligand>
        <name>a beta-D-glucoside</name>
        <dbReference type="ChEBI" id="CHEBI:22798"/>
    </ligand>
</feature>
<feature type="binding site" evidence="4">
    <location>
        <position position="392"/>
    </location>
    <ligand>
        <name>a beta-D-glucoside</name>
        <dbReference type="ChEBI" id="CHEBI:22798"/>
    </ligand>
</feature>
<feature type="binding site" evidence="3">
    <location>
        <position position="435"/>
    </location>
    <ligand>
        <name>a beta-D-glucoside</name>
        <dbReference type="ChEBI" id="CHEBI:22798"/>
    </ligand>
</feature>
<feature type="binding site" evidence="2">
    <location>
        <position position="451"/>
    </location>
    <ligand>
        <name>a beta-D-glucoside</name>
        <dbReference type="ChEBI" id="CHEBI:22798"/>
    </ligand>
</feature>
<feature type="glycosylation site" description="N-linked (GlcNAc...) asparagine" evidence="6">
    <location>
        <position position="208"/>
    </location>
</feature>
<feature type="glycosylation site" description="N-linked (GlcNAc...) asparagine" evidence="6">
    <location>
        <position position="359"/>
    </location>
</feature>
<feature type="glycosylation site" description="N-linked (GlcNAc...) asparagine" evidence="6">
    <location>
        <position position="425"/>
    </location>
</feature>
<feature type="glycosylation site" description="N-linked (GlcNAc...) asparagine" evidence="6">
    <location>
        <position position="457"/>
    </location>
</feature>
<feature type="glycosylation site" description="N-linked (GlcNAc...) asparagine" evidence="6">
    <location>
        <position position="479"/>
    </location>
</feature>
<accession>Q9LZJ1</accession>
<protein>
    <recommendedName>
        <fullName evidence="7">Beta-glucosidase 7</fullName>
        <shortName evidence="7">AtBGLU7</shortName>
        <ecNumber evidence="1">3.2.1.21</ecNumber>
    </recommendedName>
</protein>
<dbReference type="EC" id="3.2.1.21" evidence="1"/>
<dbReference type="EMBL" id="AL162651">
    <property type="protein sequence ID" value="CAB83124.1"/>
    <property type="status" value="ALT_SEQ"/>
    <property type="molecule type" value="Genomic_DNA"/>
</dbReference>
<dbReference type="EMBL" id="CP002686">
    <property type="protein sequence ID" value="AEE80386.1"/>
    <property type="molecule type" value="Genomic_DNA"/>
</dbReference>
<dbReference type="PIR" id="T48063">
    <property type="entry name" value="T48063"/>
</dbReference>
<dbReference type="RefSeq" id="NP_191833.2">
    <property type="nucleotide sequence ID" value="NM_116139.3"/>
</dbReference>
<dbReference type="SMR" id="Q9LZJ1"/>
<dbReference type="FunCoup" id="Q9LZJ1">
    <property type="interactions" value="193"/>
</dbReference>
<dbReference type="STRING" id="3702.Q9LZJ1"/>
<dbReference type="CAZy" id="GH1">
    <property type="family name" value="Glycoside Hydrolase Family 1"/>
</dbReference>
<dbReference type="GlyCosmos" id="Q9LZJ1">
    <property type="glycosylation" value="5 sites, No reported glycans"/>
</dbReference>
<dbReference type="GlyGen" id="Q9LZJ1">
    <property type="glycosylation" value="5 sites"/>
</dbReference>
<dbReference type="PaxDb" id="3702-AT3G62740.1"/>
<dbReference type="ProteomicsDB" id="240782"/>
<dbReference type="EnsemblPlants" id="AT3G62740.1">
    <property type="protein sequence ID" value="AT3G62740.1"/>
    <property type="gene ID" value="AT3G62740"/>
</dbReference>
<dbReference type="GeneID" id="825449"/>
<dbReference type="Gramene" id="AT3G62740.1">
    <property type="protein sequence ID" value="AT3G62740.1"/>
    <property type="gene ID" value="AT3G62740"/>
</dbReference>
<dbReference type="KEGG" id="ath:AT3G62740"/>
<dbReference type="Araport" id="AT3G62740"/>
<dbReference type="TAIR" id="AT3G62740">
    <property type="gene designation" value="BGLU7"/>
</dbReference>
<dbReference type="eggNOG" id="KOG0626">
    <property type="taxonomic scope" value="Eukaryota"/>
</dbReference>
<dbReference type="HOGENOM" id="CLU_001859_1_0_1"/>
<dbReference type="InParanoid" id="Q9LZJ1"/>
<dbReference type="OMA" id="TSYGMYY"/>
<dbReference type="PhylomeDB" id="Q9LZJ1"/>
<dbReference type="BioCyc" id="ARA:AT3G62740-MONOMER"/>
<dbReference type="PRO" id="PR:Q9LZJ1"/>
<dbReference type="Proteomes" id="UP000006548">
    <property type="component" value="Chromosome 3"/>
</dbReference>
<dbReference type="ExpressionAtlas" id="Q9LZJ1">
    <property type="expression patterns" value="baseline and differential"/>
</dbReference>
<dbReference type="GO" id="GO:0008422">
    <property type="term" value="F:beta-glucosidase activity"/>
    <property type="evidence" value="ECO:0007669"/>
    <property type="project" value="UniProtKB-EC"/>
</dbReference>
<dbReference type="GO" id="GO:0005975">
    <property type="term" value="P:carbohydrate metabolic process"/>
    <property type="evidence" value="ECO:0007669"/>
    <property type="project" value="InterPro"/>
</dbReference>
<dbReference type="FunFam" id="3.20.20.80:FF:000069">
    <property type="entry name" value="Beta-glucosidase 1"/>
    <property type="match status" value="1"/>
</dbReference>
<dbReference type="Gene3D" id="3.20.20.80">
    <property type="entry name" value="Glycosidases"/>
    <property type="match status" value="1"/>
</dbReference>
<dbReference type="InterPro" id="IPR001360">
    <property type="entry name" value="Glyco_hydro_1"/>
</dbReference>
<dbReference type="InterPro" id="IPR033132">
    <property type="entry name" value="Glyco_hydro_1_N_CS"/>
</dbReference>
<dbReference type="InterPro" id="IPR017853">
    <property type="entry name" value="Glycoside_hydrolase_SF"/>
</dbReference>
<dbReference type="PANTHER" id="PTHR10353:SF211">
    <property type="entry name" value="BETA-GLUCOSIDASE 10-RELATED"/>
    <property type="match status" value="1"/>
</dbReference>
<dbReference type="PANTHER" id="PTHR10353">
    <property type="entry name" value="GLYCOSYL HYDROLASE"/>
    <property type="match status" value="1"/>
</dbReference>
<dbReference type="Pfam" id="PF00232">
    <property type="entry name" value="Glyco_hydro_1"/>
    <property type="match status" value="1"/>
</dbReference>
<dbReference type="PRINTS" id="PR00131">
    <property type="entry name" value="GLHYDRLASE1"/>
</dbReference>
<dbReference type="SUPFAM" id="SSF51445">
    <property type="entry name" value="(Trans)glycosidases"/>
    <property type="match status" value="1"/>
</dbReference>
<dbReference type="PROSITE" id="PS00653">
    <property type="entry name" value="GLYCOSYL_HYDROL_F1_2"/>
    <property type="match status" value="1"/>
</dbReference>
<keyword id="KW-0325">Glycoprotein</keyword>
<keyword id="KW-0326">Glycosidase</keyword>
<keyword id="KW-0378">Hydrolase</keyword>
<keyword id="KW-1185">Reference proteome</keyword>
<keyword id="KW-0732">Signal</keyword>
<gene>
    <name evidence="7" type="primary">BGLU7</name>
    <name evidence="9" type="ordered locus">At3g62740</name>
    <name evidence="10" type="ORF">F26K9.170</name>
</gene>
<evidence type="ECO:0000250" key="1">
    <source>
        <dbReference type="UniProtKB" id="O64879"/>
    </source>
</evidence>
<evidence type="ECO:0000250" key="2">
    <source>
        <dbReference type="UniProtKB" id="P49235"/>
    </source>
</evidence>
<evidence type="ECO:0000250" key="3">
    <source>
        <dbReference type="UniProtKB" id="Q7XSK0"/>
    </source>
</evidence>
<evidence type="ECO:0000250" key="4">
    <source>
        <dbReference type="UniProtKB" id="Q9SPP9"/>
    </source>
</evidence>
<evidence type="ECO:0000255" key="5"/>
<evidence type="ECO:0000255" key="6">
    <source>
        <dbReference type="PROSITE-ProRule" id="PRU00498"/>
    </source>
</evidence>
<evidence type="ECO:0000303" key="7">
    <source>
    </source>
</evidence>
<evidence type="ECO:0000305" key="8"/>
<evidence type="ECO:0000312" key="9">
    <source>
        <dbReference type="Araport" id="AT3G62740"/>
    </source>
</evidence>
<evidence type="ECO:0000312" key="10">
    <source>
        <dbReference type="EMBL" id="CAB83124.1"/>
    </source>
</evidence>
<organism>
    <name type="scientific">Arabidopsis thaliana</name>
    <name type="common">Mouse-ear cress</name>
    <dbReference type="NCBI Taxonomy" id="3702"/>
    <lineage>
        <taxon>Eukaryota</taxon>
        <taxon>Viridiplantae</taxon>
        <taxon>Streptophyta</taxon>
        <taxon>Embryophyta</taxon>
        <taxon>Tracheophyta</taxon>
        <taxon>Spermatophyta</taxon>
        <taxon>Magnoliopsida</taxon>
        <taxon>eudicotyledons</taxon>
        <taxon>Gunneridae</taxon>
        <taxon>Pentapetalae</taxon>
        <taxon>rosids</taxon>
        <taxon>malvids</taxon>
        <taxon>Brassicales</taxon>
        <taxon>Brassicaceae</taxon>
        <taxon>Camelineae</taxon>
        <taxon>Arabidopsis</taxon>
    </lineage>
</organism>
<reference key="1">
    <citation type="journal article" date="2000" name="Nature">
        <title>Sequence and analysis of chromosome 3 of the plant Arabidopsis thaliana.</title>
        <authorList>
            <person name="Salanoubat M."/>
            <person name="Lemcke K."/>
            <person name="Rieger M."/>
            <person name="Ansorge W."/>
            <person name="Unseld M."/>
            <person name="Fartmann B."/>
            <person name="Valle G."/>
            <person name="Bloecker H."/>
            <person name="Perez-Alonso M."/>
            <person name="Obermaier B."/>
            <person name="Delseny M."/>
            <person name="Boutry M."/>
            <person name="Grivell L.A."/>
            <person name="Mache R."/>
            <person name="Puigdomenech P."/>
            <person name="De Simone V."/>
            <person name="Choisne N."/>
            <person name="Artiguenave F."/>
            <person name="Robert C."/>
            <person name="Brottier P."/>
            <person name="Wincker P."/>
            <person name="Cattolico L."/>
            <person name="Weissenbach J."/>
            <person name="Saurin W."/>
            <person name="Quetier F."/>
            <person name="Schaefer M."/>
            <person name="Mueller-Auer S."/>
            <person name="Gabel C."/>
            <person name="Fuchs M."/>
            <person name="Benes V."/>
            <person name="Wurmbach E."/>
            <person name="Drzonek H."/>
            <person name="Erfle H."/>
            <person name="Jordan N."/>
            <person name="Bangert S."/>
            <person name="Wiedelmann R."/>
            <person name="Kranz H."/>
            <person name="Voss H."/>
            <person name="Holland R."/>
            <person name="Brandt P."/>
            <person name="Nyakatura G."/>
            <person name="Vezzi A."/>
            <person name="D'Angelo M."/>
            <person name="Pallavicini A."/>
            <person name="Toppo S."/>
            <person name="Simionati B."/>
            <person name="Conrad A."/>
            <person name="Hornischer K."/>
            <person name="Kauer G."/>
            <person name="Loehnert T.-H."/>
            <person name="Nordsiek G."/>
            <person name="Reichelt J."/>
            <person name="Scharfe M."/>
            <person name="Schoen O."/>
            <person name="Bargues M."/>
            <person name="Terol J."/>
            <person name="Climent J."/>
            <person name="Navarro P."/>
            <person name="Collado C."/>
            <person name="Perez-Perez A."/>
            <person name="Ottenwaelder B."/>
            <person name="Duchemin D."/>
            <person name="Cooke R."/>
            <person name="Laudie M."/>
            <person name="Berger-Llauro C."/>
            <person name="Purnelle B."/>
            <person name="Masuy D."/>
            <person name="de Haan M."/>
            <person name="Maarse A.C."/>
            <person name="Alcaraz J.-P."/>
            <person name="Cottet A."/>
            <person name="Casacuberta E."/>
            <person name="Monfort A."/>
            <person name="Argiriou A."/>
            <person name="Flores M."/>
            <person name="Liguori R."/>
            <person name="Vitale D."/>
            <person name="Mannhaupt G."/>
            <person name="Haase D."/>
            <person name="Schoof H."/>
            <person name="Rudd S."/>
            <person name="Zaccaria P."/>
            <person name="Mewes H.-W."/>
            <person name="Mayer K.F.X."/>
            <person name="Kaul S."/>
            <person name="Town C.D."/>
            <person name="Koo H.L."/>
            <person name="Tallon L.J."/>
            <person name="Jenkins J."/>
            <person name="Rooney T."/>
            <person name="Rizzo M."/>
            <person name="Walts A."/>
            <person name="Utterback T."/>
            <person name="Fujii C.Y."/>
            <person name="Shea T.P."/>
            <person name="Creasy T.H."/>
            <person name="Haas B."/>
            <person name="Maiti R."/>
            <person name="Wu D."/>
            <person name="Peterson J."/>
            <person name="Van Aken S."/>
            <person name="Pai G."/>
            <person name="Militscher J."/>
            <person name="Sellers P."/>
            <person name="Gill J.E."/>
            <person name="Feldblyum T.V."/>
            <person name="Preuss D."/>
            <person name="Lin X."/>
            <person name="Nierman W.C."/>
            <person name="Salzberg S.L."/>
            <person name="White O."/>
            <person name="Venter J.C."/>
            <person name="Fraser C.M."/>
            <person name="Kaneko T."/>
            <person name="Nakamura Y."/>
            <person name="Sato S."/>
            <person name="Kato T."/>
            <person name="Asamizu E."/>
            <person name="Sasamoto S."/>
            <person name="Kimura T."/>
            <person name="Idesawa K."/>
            <person name="Kawashima K."/>
            <person name="Kishida Y."/>
            <person name="Kiyokawa C."/>
            <person name="Kohara M."/>
            <person name="Matsumoto M."/>
            <person name="Matsuno A."/>
            <person name="Muraki A."/>
            <person name="Nakayama S."/>
            <person name="Nakazaki N."/>
            <person name="Shinpo S."/>
            <person name="Takeuchi C."/>
            <person name="Wada T."/>
            <person name="Watanabe A."/>
            <person name="Yamada M."/>
            <person name="Yasuda M."/>
            <person name="Tabata S."/>
        </authorList>
    </citation>
    <scope>NUCLEOTIDE SEQUENCE [LARGE SCALE GENOMIC DNA]</scope>
    <source>
        <strain>cv. Columbia</strain>
    </source>
</reference>
<reference key="2">
    <citation type="journal article" date="2017" name="Plant J.">
        <title>Araport11: a complete reannotation of the Arabidopsis thaliana reference genome.</title>
        <authorList>
            <person name="Cheng C.Y."/>
            <person name="Krishnakumar V."/>
            <person name="Chan A.P."/>
            <person name="Thibaud-Nissen F."/>
            <person name="Schobel S."/>
            <person name="Town C.D."/>
        </authorList>
    </citation>
    <scope>GENOME REANNOTATION</scope>
    <source>
        <strain>cv. Columbia</strain>
    </source>
</reference>
<reference key="3">
    <citation type="journal article" date="2004" name="Plant Mol. Biol.">
        <title>Functional genomic analysis of Arabidopsis thaliana glycoside hydrolase family 1.</title>
        <authorList>
            <person name="Xu Z."/>
            <person name="Escamilla-Trevino L.L."/>
            <person name="Zeng L."/>
            <person name="Lalgondar M."/>
            <person name="Bevan D.R."/>
            <person name="Winkel B.S.J."/>
            <person name="Mohamed A."/>
            <person name="Cheng C.-L."/>
            <person name="Shih M.-C."/>
            <person name="Poulton J.E."/>
            <person name="Esen A."/>
        </authorList>
    </citation>
    <scope>GENE FAMILY</scope>
    <scope>NOMENCLATURE</scope>
</reference>
<sequence length="502" mass="56418">MKPFSQFFVFVVTVSATSYIDAFTRNDFPNDFLFGAATSAYQWEGAFDEDGKSPSVWDTTSHCDSGSNNGDIACDGYHKYKEDVMLMAEMGLESFRFSISWSRLIPNGRGRINPKGLLFYKNLIKELRSHGIEPQVTLYHYDLPQSLEDEYGGWINRKIIEDFTAFADVCFREFGEDVKLWTKINEATLFAIGSYGDGMRYGHCPPMNYSTANVCTETYIAGHNMLLAHSSASNLYKLKYKTKQRGSVGLSIYAYGLSPYTDSKDDETATERAEAFLFGWMLKPLVVGDYPDIMKRTLGSRLPVFSEEESKQVKGSSDFVGVVHYNTFYVTNRPAPSLVTSINKLFFADIGAYLIAAGNASLFEFDAVPWGLEGILQHIKQSYNNPPIYILENGKPMKHGSTLQDTPRAEFIQAYIGAVHNAITNGSDTRGYFVWSMIDLYELIGRYMTSYGMYYVNFSDPGRKRSPKLSASWYTGFLNGTIDVASQDTIQLQRKCSGSSSL</sequence>
<proteinExistence type="evidence at transcript level"/>